<accession>Q7Z7C8</accession>
<accession>Q5T0K1</accession>
<accession>Q8N4R9</accession>
<accession>Q96M52</accession>
<protein>
    <recommendedName>
        <fullName>Transcription initiation factor TFIID subunit 8</fullName>
    </recommendedName>
    <alternativeName>
        <fullName>Protein taube nuss</fullName>
    </alternativeName>
    <alternativeName>
        <fullName>TBP-associated factor 43 kDa</fullName>
    </alternativeName>
    <alternativeName>
        <fullName>TBP-associated factor 8</fullName>
    </alternativeName>
    <alternativeName>
        <fullName>Transcription initiation factor TFIID 43 kDa subunit</fullName>
        <shortName>TAFII-43</shortName>
        <shortName>TAFII43</shortName>
        <shortName>hTAFII43</shortName>
    </alternativeName>
</protein>
<dbReference type="EMBL" id="AF465841">
    <property type="protein sequence ID" value="AAP47094.1"/>
    <property type="molecule type" value="mRNA"/>
</dbReference>
<dbReference type="EMBL" id="AK057383">
    <property type="protein sequence ID" value="BAB71460.1"/>
    <property type="status" value="ALT_FRAME"/>
    <property type="molecule type" value="mRNA"/>
</dbReference>
<dbReference type="EMBL" id="AL513008">
    <property type="status" value="NOT_ANNOTATED_CDS"/>
    <property type="molecule type" value="Genomic_DNA"/>
</dbReference>
<dbReference type="EMBL" id="AL512274">
    <property type="status" value="NOT_ANNOTATED_CDS"/>
    <property type="molecule type" value="Genomic_DNA"/>
</dbReference>
<dbReference type="EMBL" id="BC119678">
    <property type="protein sequence ID" value="AAI19679.1"/>
    <property type="molecule type" value="mRNA"/>
</dbReference>
<dbReference type="EMBL" id="BC119679">
    <property type="protein sequence ID" value="AAI19680.1"/>
    <property type="molecule type" value="mRNA"/>
</dbReference>
<dbReference type="CCDS" id="CCDS43462.1">
    <molecule id="Q7Z7C8-1"/>
</dbReference>
<dbReference type="CCDS" id="CCDS93919.1">
    <molecule id="Q7Z7C8-2"/>
</dbReference>
<dbReference type="RefSeq" id="NP_001397836.1">
    <molecule id="Q7Z7C8-2"/>
    <property type="nucleotide sequence ID" value="NM_001410907.1"/>
</dbReference>
<dbReference type="RefSeq" id="NP_612639.2">
    <molecule id="Q7Z7C8-1"/>
    <property type="nucleotide sequence ID" value="NM_138572.3"/>
</dbReference>
<dbReference type="RefSeq" id="XP_011512598.1">
    <property type="nucleotide sequence ID" value="XM_011514296.1"/>
</dbReference>
<dbReference type="RefSeq" id="XP_047274130.1">
    <molecule id="Q7Z7C8-4"/>
    <property type="nucleotide sequence ID" value="XM_047418174.1"/>
</dbReference>
<dbReference type="RefSeq" id="XP_047274131.1">
    <molecule id="Q7Z7C8-4"/>
    <property type="nucleotide sequence ID" value="XM_047418175.1"/>
</dbReference>
<dbReference type="RefSeq" id="XP_054210182.1">
    <molecule id="Q7Z7C8-4"/>
    <property type="nucleotide sequence ID" value="XM_054354207.1"/>
</dbReference>
<dbReference type="RefSeq" id="XP_054210183.1">
    <molecule id="Q7Z7C8-4"/>
    <property type="nucleotide sequence ID" value="XM_054354208.1"/>
</dbReference>
<dbReference type="PDB" id="4WV4">
    <property type="method" value="X-ray"/>
    <property type="resolution" value="1.91 A"/>
    <property type="chains" value="B=25-120"/>
</dbReference>
<dbReference type="PDB" id="4WV6">
    <property type="method" value="X-ray"/>
    <property type="resolution" value="1.75 A"/>
    <property type="chains" value="B/C=297-310"/>
</dbReference>
<dbReference type="PDB" id="5FUR">
    <property type="method" value="EM"/>
    <property type="resolution" value="8.50 A"/>
    <property type="chains" value="L=1-310"/>
</dbReference>
<dbReference type="PDB" id="6MZC">
    <property type="method" value="EM"/>
    <property type="resolution" value="4.50 A"/>
    <property type="chains" value="K=1-310"/>
</dbReference>
<dbReference type="PDB" id="6MZL">
    <property type="method" value="EM"/>
    <property type="resolution" value="23.00 A"/>
    <property type="chains" value="K=1-310"/>
</dbReference>
<dbReference type="PDB" id="6MZM">
    <property type="method" value="EM"/>
    <property type="resolution" value="7.50 A"/>
    <property type="chains" value="K=1-310"/>
</dbReference>
<dbReference type="PDB" id="7EDX">
    <property type="method" value="EM"/>
    <property type="resolution" value="4.50 A"/>
    <property type="chains" value="H=1-310"/>
</dbReference>
<dbReference type="PDB" id="7EG7">
    <property type="method" value="EM"/>
    <property type="resolution" value="6.20 A"/>
    <property type="chains" value="H=1-310"/>
</dbReference>
<dbReference type="PDB" id="7EG8">
    <property type="method" value="EM"/>
    <property type="resolution" value="7.40 A"/>
    <property type="chains" value="H=1-310"/>
</dbReference>
<dbReference type="PDB" id="7EG9">
    <property type="method" value="EM"/>
    <property type="resolution" value="3.70 A"/>
    <property type="chains" value="H=1-310"/>
</dbReference>
<dbReference type="PDB" id="7EGA">
    <property type="method" value="EM"/>
    <property type="resolution" value="4.10 A"/>
    <property type="chains" value="H=1-310"/>
</dbReference>
<dbReference type="PDB" id="7EGB">
    <property type="method" value="EM"/>
    <property type="resolution" value="3.30 A"/>
    <property type="chains" value="H=1-310"/>
</dbReference>
<dbReference type="PDB" id="7EGC">
    <property type="method" value="EM"/>
    <property type="resolution" value="3.90 A"/>
    <property type="chains" value="H=1-310"/>
</dbReference>
<dbReference type="PDB" id="7EGD">
    <property type="method" value="EM"/>
    <property type="resolution" value="6.75 A"/>
    <property type="chains" value="H=1-310"/>
</dbReference>
<dbReference type="PDB" id="7EGE">
    <property type="method" value="EM"/>
    <property type="resolution" value="9.00 A"/>
    <property type="chains" value="H=1-310"/>
</dbReference>
<dbReference type="PDB" id="7EGG">
    <property type="method" value="EM"/>
    <property type="resolution" value="2.77 A"/>
    <property type="chains" value="H=1-310"/>
</dbReference>
<dbReference type="PDB" id="7EGH">
    <property type="method" value="EM"/>
    <property type="resolution" value="3.04 A"/>
    <property type="chains" value="H=1-310"/>
</dbReference>
<dbReference type="PDB" id="7EGI">
    <property type="method" value="EM"/>
    <property type="resolution" value="9.82 A"/>
    <property type="chains" value="H=1-310"/>
</dbReference>
<dbReference type="PDB" id="7EGJ">
    <property type="method" value="EM"/>
    <property type="resolution" value="8.64 A"/>
    <property type="chains" value="H=1-310"/>
</dbReference>
<dbReference type="PDB" id="7ENA">
    <property type="method" value="EM"/>
    <property type="resolution" value="4.07 A"/>
    <property type="chains" value="DH=1-310"/>
</dbReference>
<dbReference type="PDB" id="7ENC">
    <property type="method" value="EM"/>
    <property type="resolution" value="4.13 A"/>
    <property type="chains" value="DH=1-310"/>
</dbReference>
<dbReference type="PDB" id="8GXQ">
    <property type="method" value="EM"/>
    <property type="resolution" value="5.04 A"/>
    <property type="chains" value="DH=1-310"/>
</dbReference>
<dbReference type="PDB" id="8GXS">
    <property type="method" value="EM"/>
    <property type="resolution" value="4.16 A"/>
    <property type="chains" value="DH=1-310"/>
</dbReference>
<dbReference type="PDB" id="8WAK">
    <property type="method" value="EM"/>
    <property type="resolution" value="5.47 A"/>
    <property type="chains" value="H=1-310"/>
</dbReference>
<dbReference type="PDB" id="8WAL">
    <property type="method" value="EM"/>
    <property type="resolution" value="8.52 A"/>
    <property type="chains" value="H=1-310"/>
</dbReference>
<dbReference type="PDB" id="8WAN">
    <property type="method" value="EM"/>
    <property type="resolution" value="6.07 A"/>
    <property type="chains" value="H=1-310"/>
</dbReference>
<dbReference type="PDB" id="8WAO">
    <property type="method" value="EM"/>
    <property type="resolution" value="6.40 A"/>
    <property type="chains" value="H=1-310"/>
</dbReference>
<dbReference type="PDB" id="8WAP">
    <property type="method" value="EM"/>
    <property type="resolution" value="5.85 A"/>
    <property type="chains" value="H=1-310"/>
</dbReference>
<dbReference type="PDB" id="8WAQ">
    <property type="method" value="EM"/>
    <property type="resolution" value="6.29 A"/>
    <property type="chains" value="H=1-310"/>
</dbReference>
<dbReference type="PDB" id="8WAR">
    <property type="method" value="EM"/>
    <property type="resolution" value="7.20 A"/>
    <property type="chains" value="H=1-310"/>
</dbReference>
<dbReference type="PDB" id="8WAS">
    <property type="method" value="EM"/>
    <property type="resolution" value="6.13 A"/>
    <property type="chains" value="H=1-310"/>
</dbReference>
<dbReference type="PDBsum" id="4WV4"/>
<dbReference type="PDBsum" id="4WV6"/>
<dbReference type="PDBsum" id="5FUR"/>
<dbReference type="PDBsum" id="6MZC"/>
<dbReference type="PDBsum" id="6MZL"/>
<dbReference type="PDBsum" id="6MZM"/>
<dbReference type="PDBsum" id="7EDX"/>
<dbReference type="PDBsum" id="7EG7"/>
<dbReference type="PDBsum" id="7EG8"/>
<dbReference type="PDBsum" id="7EG9"/>
<dbReference type="PDBsum" id="7EGA"/>
<dbReference type="PDBsum" id="7EGB"/>
<dbReference type="PDBsum" id="7EGC"/>
<dbReference type="PDBsum" id="7EGD"/>
<dbReference type="PDBsum" id="7EGE"/>
<dbReference type="PDBsum" id="7EGG"/>
<dbReference type="PDBsum" id="7EGH"/>
<dbReference type="PDBsum" id="7EGI"/>
<dbReference type="PDBsum" id="7EGJ"/>
<dbReference type="PDBsum" id="7ENA"/>
<dbReference type="PDBsum" id="7ENC"/>
<dbReference type="PDBsum" id="8GXQ"/>
<dbReference type="PDBsum" id="8GXS"/>
<dbReference type="PDBsum" id="8WAK"/>
<dbReference type="PDBsum" id="8WAL"/>
<dbReference type="PDBsum" id="8WAN"/>
<dbReference type="PDBsum" id="8WAO"/>
<dbReference type="PDBsum" id="8WAP"/>
<dbReference type="PDBsum" id="8WAQ"/>
<dbReference type="PDBsum" id="8WAR"/>
<dbReference type="PDBsum" id="8WAS"/>
<dbReference type="EMDB" id="EMD-31075"/>
<dbReference type="EMDB" id="EMD-31107"/>
<dbReference type="EMDB" id="EMD-31108"/>
<dbReference type="EMDB" id="EMD-31109"/>
<dbReference type="EMDB" id="EMD-31110"/>
<dbReference type="EMDB" id="EMD-31111"/>
<dbReference type="EMDB" id="EMD-31112"/>
<dbReference type="EMDB" id="EMD-31113"/>
<dbReference type="EMDB" id="EMD-31114"/>
<dbReference type="EMDB" id="EMD-31116"/>
<dbReference type="EMDB" id="EMD-31117"/>
<dbReference type="EMDB" id="EMD-31118"/>
<dbReference type="EMDB" id="EMD-31119"/>
<dbReference type="EMDB" id="EMD-31204"/>
<dbReference type="EMDB" id="EMD-31207"/>
<dbReference type="EMDB" id="EMD-34359"/>
<dbReference type="EMDB" id="EMD-34360"/>
<dbReference type="EMDB" id="EMD-37395"/>
<dbReference type="EMDB" id="EMD-37396"/>
<dbReference type="EMDB" id="EMD-37398"/>
<dbReference type="EMDB" id="EMD-37399"/>
<dbReference type="EMDB" id="EMD-37400"/>
<dbReference type="EMDB" id="EMD-37401"/>
<dbReference type="EMDB" id="EMD-37402"/>
<dbReference type="EMDB" id="EMD-37403"/>
<dbReference type="EMDB" id="EMD-9298"/>
<dbReference type="EMDB" id="EMD-9305"/>
<dbReference type="EMDB" id="EMD-9306"/>
<dbReference type="SMR" id="Q7Z7C8"/>
<dbReference type="BioGRID" id="126205">
    <property type="interactions" value="51"/>
</dbReference>
<dbReference type="ComplexPortal" id="CPX-915">
    <property type="entry name" value="General transcription factor complex TFIID"/>
</dbReference>
<dbReference type="ComplexPortal" id="CPX-930">
    <property type="entry name" value="General transcription factor complex TFIID, TAF4B variant"/>
</dbReference>
<dbReference type="DIP" id="DIP-60591N"/>
<dbReference type="FunCoup" id="Q7Z7C8">
    <property type="interactions" value="4363"/>
</dbReference>
<dbReference type="IntAct" id="Q7Z7C8">
    <property type="interactions" value="37"/>
</dbReference>
<dbReference type="MINT" id="Q7Z7C8"/>
<dbReference type="STRING" id="9606.ENSP00000362068"/>
<dbReference type="GlyGen" id="Q7Z7C8">
    <property type="glycosylation" value="4 sites, 1 O-linked glycan (4 sites)"/>
</dbReference>
<dbReference type="iPTMnet" id="Q7Z7C8"/>
<dbReference type="MetOSite" id="Q7Z7C8"/>
<dbReference type="PhosphoSitePlus" id="Q7Z7C8"/>
<dbReference type="BioMuta" id="TAF8"/>
<dbReference type="DMDM" id="74723384"/>
<dbReference type="jPOST" id="Q7Z7C8"/>
<dbReference type="MassIVE" id="Q7Z7C8"/>
<dbReference type="PaxDb" id="9606-ENSP00000362068"/>
<dbReference type="PeptideAtlas" id="Q7Z7C8"/>
<dbReference type="ProteomicsDB" id="69515">
    <molecule id="Q7Z7C8-1"/>
</dbReference>
<dbReference type="ProteomicsDB" id="69516">
    <molecule id="Q7Z7C8-2"/>
</dbReference>
<dbReference type="ProteomicsDB" id="69517">
    <molecule id="Q7Z7C8-4"/>
</dbReference>
<dbReference type="Pumba" id="Q7Z7C8"/>
<dbReference type="Antibodypedia" id="30123">
    <property type="antibodies" value="143 antibodies from 21 providers"/>
</dbReference>
<dbReference type="DNASU" id="129685"/>
<dbReference type="Ensembl" id="ENST00000372977.8">
    <molecule id="Q7Z7C8-1"/>
    <property type="protein sequence ID" value="ENSP00000362068.3"/>
    <property type="gene ID" value="ENSG00000137413.17"/>
</dbReference>
<dbReference type="Ensembl" id="ENST00000372982.8">
    <molecule id="Q7Z7C8-4"/>
    <property type="protein sequence ID" value="ENSP00000362073.4"/>
    <property type="gene ID" value="ENSG00000137413.17"/>
</dbReference>
<dbReference type="Ensembl" id="ENST00000456846.6">
    <molecule id="Q7Z7C8-2"/>
    <property type="protein sequence ID" value="ENSP00000411900.2"/>
    <property type="gene ID" value="ENSG00000137413.17"/>
</dbReference>
<dbReference type="Ensembl" id="ENST00000494547.5">
    <molecule id="Q7Z7C8-4"/>
    <property type="protein sequence ID" value="ENSP00000417867.1"/>
    <property type="gene ID" value="ENSG00000137413.17"/>
</dbReference>
<dbReference type="GeneID" id="129685"/>
<dbReference type="KEGG" id="hsa:129685"/>
<dbReference type="MANE-Select" id="ENST00000372977.8">
    <property type="protein sequence ID" value="ENSP00000362068.3"/>
    <property type="RefSeq nucleotide sequence ID" value="NM_138572.3"/>
    <property type="RefSeq protein sequence ID" value="NP_612639.2"/>
</dbReference>
<dbReference type="UCSC" id="uc003ors.4">
    <molecule id="Q7Z7C8-1"/>
    <property type="organism name" value="human"/>
</dbReference>
<dbReference type="AGR" id="HGNC:17300"/>
<dbReference type="CTD" id="129685"/>
<dbReference type="DisGeNET" id="129685"/>
<dbReference type="GeneCards" id="TAF8"/>
<dbReference type="HGNC" id="HGNC:17300">
    <property type="gene designation" value="TAF8"/>
</dbReference>
<dbReference type="HPA" id="ENSG00000137413">
    <property type="expression patterns" value="Low tissue specificity"/>
</dbReference>
<dbReference type="MalaCards" id="TAF8"/>
<dbReference type="MIM" id="609514">
    <property type="type" value="gene"/>
</dbReference>
<dbReference type="MIM" id="619972">
    <property type="type" value="phenotype"/>
</dbReference>
<dbReference type="neXtProt" id="NX_Q7Z7C8"/>
<dbReference type="OpenTargets" id="ENSG00000137413"/>
<dbReference type="PharmGKB" id="PA162405144"/>
<dbReference type="VEuPathDB" id="HostDB:ENSG00000137413"/>
<dbReference type="eggNOG" id="KOG4336">
    <property type="taxonomic scope" value="Eukaryota"/>
</dbReference>
<dbReference type="GeneTree" id="ENSGT00390000017567"/>
<dbReference type="InParanoid" id="Q7Z7C8"/>
<dbReference type="OMA" id="SAHNYCE"/>
<dbReference type="OrthoDB" id="2193813at2759"/>
<dbReference type="PAN-GO" id="Q7Z7C8">
    <property type="GO annotations" value="2 GO annotations based on evolutionary models"/>
</dbReference>
<dbReference type="PhylomeDB" id="Q7Z7C8"/>
<dbReference type="TreeFam" id="TF316311"/>
<dbReference type="PathwayCommons" id="Q7Z7C8"/>
<dbReference type="Reactome" id="R-HSA-6807505">
    <property type="pathway name" value="RNA polymerase II transcribes snRNA genes"/>
</dbReference>
<dbReference type="SignaLink" id="Q7Z7C8"/>
<dbReference type="SIGNOR" id="Q7Z7C8"/>
<dbReference type="BioGRID-ORCS" id="129685">
    <property type="hits" value="594 hits in 1182 CRISPR screens"/>
</dbReference>
<dbReference type="ChiTaRS" id="TAF8">
    <property type="organism name" value="human"/>
</dbReference>
<dbReference type="EvolutionaryTrace" id="Q7Z7C8"/>
<dbReference type="GeneWiki" id="TAF8"/>
<dbReference type="GenomeRNAi" id="129685"/>
<dbReference type="Pharos" id="Q7Z7C8">
    <property type="development level" value="Tbio"/>
</dbReference>
<dbReference type="PRO" id="PR:Q7Z7C8"/>
<dbReference type="Proteomes" id="UP000005640">
    <property type="component" value="Chromosome 6"/>
</dbReference>
<dbReference type="RNAct" id="Q7Z7C8">
    <property type="molecule type" value="protein"/>
</dbReference>
<dbReference type="Bgee" id="ENSG00000137413">
    <property type="expression patterns" value="Expressed in buccal mucosa cell and 146 other cell types or tissues"/>
</dbReference>
<dbReference type="ExpressionAtlas" id="Q7Z7C8">
    <property type="expression patterns" value="baseline and differential"/>
</dbReference>
<dbReference type="GO" id="GO:0005654">
    <property type="term" value="C:nucleoplasm"/>
    <property type="evidence" value="ECO:0000314"/>
    <property type="project" value="HPA"/>
</dbReference>
<dbReference type="GO" id="GO:0005634">
    <property type="term" value="C:nucleus"/>
    <property type="evidence" value="ECO:0000314"/>
    <property type="project" value="HGNC-UCL"/>
</dbReference>
<dbReference type="GO" id="GO:0048471">
    <property type="term" value="C:perinuclear region of cytoplasm"/>
    <property type="evidence" value="ECO:0000314"/>
    <property type="project" value="HGNC-UCL"/>
</dbReference>
<dbReference type="GO" id="GO:0005669">
    <property type="term" value="C:transcription factor TFIID complex"/>
    <property type="evidence" value="ECO:0000314"/>
    <property type="project" value="UniProtKB"/>
</dbReference>
<dbReference type="GO" id="GO:0046982">
    <property type="term" value="F:protein heterodimerization activity"/>
    <property type="evidence" value="ECO:0007669"/>
    <property type="project" value="InterPro"/>
</dbReference>
<dbReference type="GO" id="GO:0016251">
    <property type="term" value="F:RNA polymerase II general transcription initiation factor activity"/>
    <property type="evidence" value="ECO:0000305"/>
    <property type="project" value="ARUK-UCL"/>
</dbReference>
<dbReference type="GO" id="GO:0030154">
    <property type="term" value="P:cell differentiation"/>
    <property type="evidence" value="ECO:0007669"/>
    <property type="project" value="UniProtKB-KW"/>
</dbReference>
<dbReference type="GO" id="GO:0001112">
    <property type="term" value="P:DNA-templated transcription open complex formation"/>
    <property type="evidence" value="ECO:0000314"/>
    <property type="project" value="MGI"/>
</dbReference>
<dbReference type="GO" id="GO:0001833">
    <property type="term" value="P:inner cell mass cell proliferation"/>
    <property type="evidence" value="ECO:0007669"/>
    <property type="project" value="Ensembl"/>
</dbReference>
<dbReference type="GO" id="GO:0051457">
    <property type="term" value="P:maintenance of protein location in nucleus"/>
    <property type="evidence" value="ECO:0000314"/>
    <property type="project" value="HGNC-UCL"/>
</dbReference>
<dbReference type="GO" id="GO:0042789">
    <property type="term" value="P:mRNA transcription by RNA polymerase II"/>
    <property type="evidence" value="ECO:0000314"/>
    <property type="project" value="ComplexPortal"/>
</dbReference>
<dbReference type="GO" id="GO:0060261">
    <property type="term" value="P:positive regulation of transcription initiation by RNA polymerase II"/>
    <property type="evidence" value="ECO:0000314"/>
    <property type="project" value="ComplexPortal"/>
</dbReference>
<dbReference type="GO" id="GO:0045598">
    <property type="term" value="P:regulation of fat cell differentiation"/>
    <property type="evidence" value="ECO:0000314"/>
    <property type="project" value="MGI"/>
</dbReference>
<dbReference type="GO" id="GO:0051123">
    <property type="term" value="P:RNA polymerase II preinitiation complex assembly"/>
    <property type="evidence" value="ECO:0000353"/>
    <property type="project" value="ComplexPortal"/>
</dbReference>
<dbReference type="GO" id="GO:0006367">
    <property type="term" value="P:transcription initiation at RNA polymerase II promoter"/>
    <property type="evidence" value="ECO:0000318"/>
    <property type="project" value="GO_Central"/>
</dbReference>
<dbReference type="CDD" id="cd22918">
    <property type="entry name" value="HFD_TAF8"/>
    <property type="match status" value="1"/>
</dbReference>
<dbReference type="CDD" id="cd08049">
    <property type="entry name" value="TAF8"/>
    <property type="match status" value="1"/>
</dbReference>
<dbReference type="FunFam" id="1.10.20.10:FF:000031">
    <property type="entry name" value="transcription initiation factor TFIID subunit 8 isoform X2"/>
    <property type="match status" value="1"/>
</dbReference>
<dbReference type="Gene3D" id="1.10.20.10">
    <property type="entry name" value="Histone, subunit A"/>
    <property type="match status" value="1"/>
</dbReference>
<dbReference type="InterPro" id="IPR006565">
    <property type="entry name" value="BTP"/>
</dbReference>
<dbReference type="InterPro" id="IPR009072">
    <property type="entry name" value="Histone-fold"/>
</dbReference>
<dbReference type="InterPro" id="IPR037818">
    <property type="entry name" value="TAF8"/>
</dbReference>
<dbReference type="InterPro" id="IPR019473">
    <property type="entry name" value="TFIID_su8_C"/>
</dbReference>
<dbReference type="PANTHER" id="PTHR46469">
    <property type="entry name" value="TRANSCRIPTION INITIATION FACTOR TFIID SUBUNIT 8"/>
    <property type="match status" value="1"/>
</dbReference>
<dbReference type="PANTHER" id="PTHR46469:SF1">
    <property type="entry name" value="TRANSCRIPTION INITIATION FACTOR TFIID SUBUNIT 8"/>
    <property type="match status" value="1"/>
</dbReference>
<dbReference type="Pfam" id="PF07524">
    <property type="entry name" value="Bromo_TP"/>
    <property type="match status" value="1"/>
</dbReference>
<dbReference type="Pfam" id="PF10406">
    <property type="entry name" value="TAF8_C"/>
    <property type="match status" value="1"/>
</dbReference>
<dbReference type="SMART" id="SM00576">
    <property type="entry name" value="BTP"/>
    <property type="match status" value="1"/>
</dbReference>
<dbReference type="SUPFAM" id="SSF47113">
    <property type="entry name" value="Histone-fold"/>
    <property type="match status" value="1"/>
</dbReference>
<reference key="1">
    <citation type="journal article" date="2003" name="Mol. Cell">
        <title>The TBN protein, which is essential for early embryonic mouse development, is an inducible TAFII implicated in adipogenesis.</title>
        <authorList>
            <person name="Guermah M."/>
            <person name="Ge K."/>
            <person name="Chiang C.-M."/>
            <person name="Roeder R.G."/>
        </authorList>
    </citation>
    <scope>NUCLEOTIDE SEQUENCE [MRNA] (ISOFORM 1)</scope>
    <scope>PROTEIN SEQUENCE OF 134-157; 162-178 AND 268-292</scope>
    <scope>FUNCTION</scope>
    <scope>SUBCELLULAR LOCATION</scope>
    <scope>INTERACTION WITH TBP; TAF1; TAF6; TAF10 AND TAF11</scope>
</reference>
<reference key="2">
    <citation type="journal article" date="2004" name="Nat. Genet.">
        <title>Complete sequencing and characterization of 21,243 full-length human cDNAs.</title>
        <authorList>
            <person name="Ota T."/>
            <person name="Suzuki Y."/>
            <person name="Nishikawa T."/>
            <person name="Otsuki T."/>
            <person name="Sugiyama T."/>
            <person name="Irie R."/>
            <person name="Wakamatsu A."/>
            <person name="Hayashi K."/>
            <person name="Sato H."/>
            <person name="Nagai K."/>
            <person name="Kimura K."/>
            <person name="Makita H."/>
            <person name="Sekine M."/>
            <person name="Obayashi M."/>
            <person name="Nishi T."/>
            <person name="Shibahara T."/>
            <person name="Tanaka T."/>
            <person name="Ishii S."/>
            <person name="Yamamoto J."/>
            <person name="Saito K."/>
            <person name="Kawai Y."/>
            <person name="Isono Y."/>
            <person name="Nakamura Y."/>
            <person name="Nagahari K."/>
            <person name="Murakami K."/>
            <person name="Yasuda T."/>
            <person name="Iwayanagi T."/>
            <person name="Wagatsuma M."/>
            <person name="Shiratori A."/>
            <person name="Sudo H."/>
            <person name="Hosoiri T."/>
            <person name="Kaku Y."/>
            <person name="Kodaira H."/>
            <person name="Kondo H."/>
            <person name="Sugawara M."/>
            <person name="Takahashi M."/>
            <person name="Kanda K."/>
            <person name="Yokoi T."/>
            <person name="Furuya T."/>
            <person name="Kikkawa E."/>
            <person name="Omura Y."/>
            <person name="Abe K."/>
            <person name="Kamihara K."/>
            <person name="Katsuta N."/>
            <person name="Sato K."/>
            <person name="Tanikawa M."/>
            <person name="Yamazaki M."/>
            <person name="Ninomiya K."/>
            <person name="Ishibashi T."/>
            <person name="Yamashita H."/>
            <person name="Murakawa K."/>
            <person name="Fujimori K."/>
            <person name="Tanai H."/>
            <person name="Kimata M."/>
            <person name="Watanabe M."/>
            <person name="Hiraoka S."/>
            <person name="Chiba Y."/>
            <person name="Ishida S."/>
            <person name="Ono Y."/>
            <person name="Takiguchi S."/>
            <person name="Watanabe S."/>
            <person name="Yosida M."/>
            <person name="Hotuta T."/>
            <person name="Kusano J."/>
            <person name="Kanehori K."/>
            <person name="Takahashi-Fujii A."/>
            <person name="Hara H."/>
            <person name="Tanase T.-O."/>
            <person name="Nomura Y."/>
            <person name="Togiya S."/>
            <person name="Komai F."/>
            <person name="Hara R."/>
            <person name="Takeuchi K."/>
            <person name="Arita M."/>
            <person name="Imose N."/>
            <person name="Musashino K."/>
            <person name="Yuuki H."/>
            <person name="Oshima A."/>
            <person name="Sasaki N."/>
            <person name="Aotsuka S."/>
            <person name="Yoshikawa Y."/>
            <person name="Matsunawa H."/>
            <person name="Ichihara T."/>
            <person name="Shiohata N."/>
            <person name="Sano S."/>
            <person name="Moriya S."/>
            <person name="Momiyama H."/>
            <person name="Satoh N."/>
            <person name="Takami S."/>
            <person name="Terashima Y."/>
            <person name="Suzuki O."/>
            <person name="Nakagawa S."/>
            <person name="Senoh A."/>
            <person name="Mizoguchi H."/>
            <person name="Goto Y."/>
            <person name="Shimizu F."/>
            <person name="Wakebe H."/>
            <person name="Hishigaki H."/>
            <person name="Watanabe T."/>
            <person name="Sugiyama A."/>
            <person name="Takemoto M."/>
            <person name="Kawakami B."/>
            <person name="Yamazaki M."/>
            <person name="Watanabe K."/>
            <person name="Kumagai A."/>
            <person name="Itakura S."/>
            <person name="Fukuzumi Y."/>
            <person name="Fujimori Y."/>
            <person name="Komiyama M."/>
            <person name="Tashiro H."/>
            <person name="Tanigami A."/>
            <person name="Fujiwara T."/>
            <person name="Ono T."/>
            <person name="Yamada K."/>
            <person name="Fujii Y."/>
            <person name="Ozaki K."/>
            <person name="Hirao M."/>
            <person name="Ohmori Y."/>
            <person name="Kawabata A."/>
            <person name="Hikiji T."/>
            <person name="Kobatake N."/>
            <person name="Inagaki H."/>
            <person name="Ikema Y."/>
            <person name="Okamoto S."/>
            <person name="Okitani R."/>
            <person name="Kawakami T."/>
            <person name="Noguchi S."/>
            <person name="Itoh T."/>
            <person name="Shigeta K."/>
            <person name="Senba T."/>
            <person name="Matsumura K."/>
            <person name="Nakajima Y."/>
            <person name="Mizuno T."/>
            <person name="Morinaga M."/>
            <person name="Sasaki M."/>
            <person name="Togashi T."/>
            <person name="Oyama M."/>
            <person name="Hata H."/>
            <person name="Watanabe M."/>
            <person name="Komatsu T."/>
            <person name="Mizushima-Sugano J."/>
            <person name="Satoh T."/>
            <person name="Shirai Y."/>
            <person name="Takahashi Y."/>
            <person name="Nakagawa K."/>
            <person name="Okumura K."/>
            <person name="Nagase T."/>
            <person name="Nomura N."/>
            <person name="Kikuchi H."/>
            <person name="Masuho Y."/>
            <person name="Yamashita R."/>
            <person name="Nakai K."/>
            <person name="Yada T."/>
            <person name="Nakamura Y."/>
            <person name="Ohara O."/>
            <person name="Isogai T."/>
            <person name="Sugano S."/>
        </authorList>
    </citation>
    <scope>NUCLEOTIDE SEQUENCE [LARGE SCALE MRNA] (ISOFORM 3)</scope>
    <source>
        <tissue>Testis</tissue>
    </source>
</reference>
<reference key="3">
    <citation type="journal article" date="2003" name="Nature">
        <title>The DNA sequence and analysis of human chromosome 6.</title>
        <authorList>
            <person name="Mungall A.J."/>
            <person name="Palmer S.A."/>
            <person name="Sims S.K."/>
            <person name="Edwards C.A."/>
            <person name="Ashurst J.L."/>
            <person name="Wilming L."/>
            <person name="Jones M.C."/>
            <person name="Horton R."/>
            <person name="Hunt S.E."/>
            <person name="Scott C.E."/>
            <person name="Gilbert J.G.R."/>
            <person name="Clamp M.E."/>
            <person name="Bethel G."/>
            <person name="Milne S."/>
            <person name="Ainscough R."/>
            <person name="Almeida J.P."/>
            <person name="Ambrose K.D."/>
            <person name="Andrews T.D."/>
            <person name="Ashwell R.I.S."/>
            <person name="Babbage A.K."/>
            <person name="Bagguley C.L."/>
            <person name="Bailey J."/>
            <person name="Banerjee R."/>
            <person name="Barker D.J."/>
            <person name="Barlow K.F."/>
            <person name="Bates K."/>
            <person name="Beare D.M."/>
            <person name="Beasley H."/>
            <person name="Beasley O."/>
            <person name="Bird C.P."/>
            <person name="Blakey S.E."/>
            <person name="Bray-Allen S."/>
            <person name="Brook J."/>
            <person name="Brown A.J."/>
            <person name="Brown J.Y."/>
            <person name="Burford D.C."/>
            <person name="Burrill W."/>
            <person name="Burton J."/>
            <person name="Carder C."/>
            <person name="Carter N.P."/>
            <person name="Chapman J.C."/>
            <person name="Clark S.Y."/>
            <person name="Clark G."/>
            <person name="Clee C.M."/>
            <person name="Clegg S."/>
            <person name="Cobley V."/>
            <person name="Collier R.E."/>
            <person name="Collins J.E."/>
            <person name="Colman L.K."/>
            <person name="Corby N.R."/>
            <person name="Coville G.J."/>
            <person name="Culley K.M."/>
            <person name="Dhami P."/>
            <person name="Davies J."/>
            <person name="Dunn M."/>
            <person name="Earthrowl M.E."/>
            <person name="Ellington A.E."/>
            <person name="Evans K.A."/>
            <person name="Faulkner L."/>
            <person name="Francis M.D."/>
            <person name="Frankish A."/>
            <person name="Frankland J."/>
            <person name="French L."/>
            <person name="Garner P."/>
            <person name="Garnett J."/>
            <person name="Ghori M.J."/>
            <person name="Gilby L.M."/>
            <person name="Gillson C.J."/>
            <person name="Glithero R.J."/>
            <person name="Grafham D.V."/>
            <person name="Grant M."/>
            <person name="Gribble S."/>
            <person name="Griffiths C."/>
            <person name="Griffiths M.N.D."/>
            <person name="Hall R."/>
            <person name="Halls K.S."/>
            <person name="Hammond S."/>
            <person name="Harley J.L."/>
            <person name="Hart E.A."/>
            <person name="Heath P.D."/>
            <person name="Heathcott R."/>
            <person name="Holmes S.J."/>
            <person name="Howden P.J."/>
            <person name="Howe K.L."/>
            <person name="Howell G.R."/>
            <person name="Huckle E."/>
            <person name="Humphray S.J."/>
            <person name="Humphries M.D."/>
            <person name="Hunt A.R."/>
            <person name="Johnson C.M."/>
            <person name="Joy A.A."/>
            <person name="Kay M."/>
            <person name="Keenan S.J."/>
            <person name="Kimberley A.M."/>
            <person name="King A."/>
            <person name="Laird G.K."/>
            <person name="Langford C."/>
            <person name="Lawlor S."/>
            <person name="Leongamornlert D.A."/>
            <person name="Leversha M."/>
            <person name="Lloyd C.R."/>
            <person name="Lloyd D.M."/>
            <person name="Loveland J.E."/>
            <person name="Lovell J."/>
            <person name="Martin S."/>
            <person name="Mashreghi-Mohammadi M."/>
            <person name="Maslen G.L."/>
            <person name="Matthews L."/>
            <person name="McCann O.T."/>
            <person name="McLaren S.J."/>
            <person name="McLay K."/>
            <person name="McMurray A."/>
            <person name="Moore M.J.F."/>
            <person name="Mullikin J.C."/>
            <person name="Niblett D."/>
            <person name="Nickerson T."/>
            <person name="Novik K.L."/>
            <person name="Oliver K."/>
            <person name="Overton-Larty E.K."/>
            <person name="Parker A."/>
            <person name="Patel R."/>
            <person name="Pearce A.V."/>
            <person name="Peck A.I."/>
            <person name="Phillimore B.J.C.T."/>
            <person name="Phillips S."/>
            <person name="Plumb R.W."/>
            <person name="Porter K.M."/>
            <person name="Ramsey Y."/>
            <person name="Ranby S.A."/>
            <person name="Rice C.M."/>
            <person name="Ross M.T."/>
            <person name="Searle S.M."/>
            <person name="Sehra H.K."/>
            <person name="Sheridan E."/>
            <person name="Skuce C.D."/>
            <person name="Smith S."/>
            <person name="Smith M."/>
            <person name="Spraggon L."/>
            <person name="Squares S.L."/>
            <person name="Steward C.A."/>
            <person name="Sycamore N."/>
            <person name="Tamlyn-Hall G."/>
            <person name="Tester J."/>
            <person name="Theaker A.J."/>
            <person name="Thomas D.W."/>
            <person name="Thorpe A."/>
            <person name="Tracey A."/>
            <person name="Tromans A."/>
            <person name="Tubby B."/>
            <person name="Wall M."/>
            <person name="Wallis J.M."/>
            <person name="West A.P."/>
            <person name="White S.S."/>
            <person name="Whitehead S.L."/>
            <person name="Whittaker H."/>
            <person name="Wild A."/>
            <person name="Willey D.J."/>
            <person name="Wilmer T.E."/>
            <person name="Wood J.M."/>
            <person name="Wray P.W."/>
            <person name="Wyatt J.C."/>
            <person name="Young L."/>
            <person name="Younger R.M."/>
            <person name="Bentley D.R."/>
            <person name="Coulson A."/>
            <person name="Durbin R.M."/>
            <person name="Hubbard T."/>
            <person name="Sulston J.E."/>
            <person name="Dunham I."/>
            <person name="Rogers J."/>
            <person name="Beck S."/>
        </authorList>
    </citation>
    <scope>NUCLEOTIDE SEQUENCE [LARGE SCALE GENOMIC DNA]</scope>
</reference>
<reference key="4">
    <citation type="journal article" date="2004" name="Genome Res.">
        <title>The status, quality, and expansion of the NIH full-length cDNA project: the Mammalian Gene Collection (MGC).</title>
        <authorList>
            <consortium name="The MGC Project Team"/>
        </authorList>
    </citation>
    <scope>NUCLEOTIDE SEQUENCE [LARGE SCALE MRNA] (ISOFORM 2)</scope>
</reference>
<reference key="5">
    <citation type="journal article" date="2005" name="Mol. Cell. Biol.">
        <title>The nuclear import of TAF10 is regulated by one of its three histone fold domain-containing interaction partners.</title>
        <authorList>
            <person name="Soutoglou E."/>
            <person name="Demeny M.A."/>
            <person name="Scheer E."/>
            <person name="Fienga G."/>
            <person name="Sassone-Corsi P."/>
            <person name="Tora L."/>
        </authorList>
    </citation>
    <scope>INTERACTION WITH TAF10</scope>
</reference>
<reference key="6">
    <citation type="journal article" date="2007" name="PLoS ONE">
        <title>Identification of a small TAF complex and its role in the assembly of TAF-containing complexes.</title>
        <authorList>
            <person name="Demeny M.A."/>
            <person name="Soutoglou E."/>
            <person name="Nagy Z."/>
            <person name="Scheer E."/>
            <person name="Janoshazi A."/>
            <person name="Richardot M."/>
            <person name="Argentini M."/>
            <person name="Kessler P."/>
            <person name="Tora L."/>
        </authorList>
    </citation>
    <scope>INTERACTION IN A SMAT COMPLEX WITH TAF10 AND SUPT7L</scope>
    <scope>INTERACTION IN A TFIID COMPLEX WITH TAF1; TAF6; TAF11 AND TBP</scope>
</reference>
<reference key="7">
    <citation type="journal article" date="2008" name="Proc. Natl. Acad. Sci. U.S.A.">
        <title>A quantitative atlas of mitotic phosphorylation.</title>
        <authorList>
            <person name="Dephoure N."/>
            <person name="Zhou C."/>
            <person name="Villen J."/>
            <person name="Beausoleil S.A."/>
            <person name="Bakalarski C.E."/>
            <person name="Elledge S.J."/>
            <person name="Gygi S.P."/>
        </authorList>
    </citation>
    <scope>PHOSPHORYLATION [LARGE SCALE ANALYSIS] AT THR-130</scope>
    <scope>IDENTIFICATION BY MASS SPECTROMETRY [LARGE SCALE ANALYSIS]</scope>
    <source>
        <tissue>Cervix carcinoma</tissue>
    </source>
</reference>
<reference key="8">
    <citation type="journal article" date="2009" name="Anal. Chem.">
        <title>Lys-N and trypsin cover complementary parts of the phosphoproteome in a refined SCX-based approach.</title>
        <authorList>
            <person name="Gauci S."/>
            <person name="Helbig A.O."/>
            <person name="Slijper M."/>
            <person name="Krijgsveld J."/>
            <person name="Heck A.J."/>
            <person name="Mohammed S."/>
        </authorList>
    </citation>
    <scope>ACETYLATION [LARGE SCALE ANALYSIS] AT ALA-2</scope>
    <scope>CLEAVAGE OF INITIATOR METHIONINE [LARGE SCALE ANALYSIS]</scope>
    <scope>IDENTIFICATION BY MASS SPECTROMETRY [LARGE SCALE ANALYSIS]</scope>
</reference>
<reference key="9">
    <citation type="journal article" date="2012" name="Proc. Natl. Acad. Sci. U.S.A.">
        <title>N-terminal acetylome analyses and functional insights of the N-terminal acetyltransferase NatB.</title>
        <authorList>
            <person name="Van Damme P."/>
            <person name="Lasa M."/>
            <person name="Polevoda B."/>
            <person name="Gazquez C."/>
            <person name="Elosegui-Artola A."/>
            <person name="Kim D.S."/>
            <person name="De Juan-Pardo E."/>
            <person name="Demeyer K."/>
            <person name="Hole K."/>
            <person name="Larrea E."/>
            <person name="Timmerman E."/>
            <person name="Prieto J."/>
            <person name="Arnesen T."/>
            <person name="Sherman F."/>
            <person name="Gevaert K."/>
            <person name="Aldabe R."/>
        </authorList>
    </citation>
    <scope>ACETYLATION [LARGE SCALE ANALYSIS] AT ALA-2</scope>
    <scope>CLEAVAGE OF INITIATOR METHIONINE [LARGE SCALE ANALYSIS]</scope>
    <scope>IDENTIFICATION BY MASS SPECTROMETRY [LARGE SCALE ANALYSIS]</scope>
</reference>
<reference key="10">
    <citation type="journal article" date="2013" name="J. Proteome Res.">
        <title>Toward a comprehensive characterization of a human cancer cell phosphoproteome.</title>
        <authorList>
            <person name="Zhou H."/>
            <person name="Di Palma S."/>
            <person name="Preisinger C."/>
            <person name="Peng M."/>
            <person name="Polat A.N."/>
            <person name="Heck A.J."/>
            <person name="Mohammed S."/>
        </authorList>
    </citation>
    <scope>PHOSPHORYLATION [LARGE SCALE ANALYSIS] AT SER-271</scope>
    <scope>IDENTIFICATION BY MASS SPECTROMETRY [LARGE SCALE ANALYSIS]</scope>
    <source>
        <tissue>Cervix carcinoma</tissue>
        <tissue>Erythroleukemia</tissue>
    </source>
</reference>
<reference evidence="13 14 15 16 17 18 19 20 21 22" key="11">
    <citation type="journal article" date="2021" name="Science">
        <title>Structural insights into preinitiation complex assembly on core promoters.</title>
        <authorList>
            <person name="Chen X."/>
            <person name="Qi Y."/>
            <person name="Wu Z."/>
            <person name="Wang X."/>
            <person name="Li J."/>
            <person name="Zhao D."/>
            <person name="Hou H."/>
            <person name="Li Y."/>
            <person name="Yu Z."/>
            <person name="Liu W."/>
            <person name="Wang M."/>
            <person name="Ren Y."/>
            <person name="Li Z."/>
            <person name="Yang H."/>
            <person name="Xu Y."/>
        </authorList>
    </citation>
    <scope>STRUCTURE BY ELECTRON MICROSCOPY (2.77 ANGSTROMS)</scope>
    <scope>FUNCTION</scope>
    <scope>IDENTIFICATION IN THE TFIID COMPLEX</scope>
    <scope>SUBUNIT</scope>
</reference>
<reference key="12">
    <citation type="journal article" date="2018" name="Hum. Mol. Genet.">
        <title>Homozygous TAF8 mutation in a patient with intellectual disability results in undetectable TAF8 protein, but preserved RNA polymerase II transcription.</title>
        <authorList>
            <person name="El-Saafin F."/>
            <person name="Curry C."/>
            <person name="Ye T."/>
            <person name="Garnier J.M."/>
            <person name="Kolb-Cheynel I."/>
            <person name="Stierle M."/>
            <person name="Downer N.L."/>
            <person name="Dixon M.P."/>
            <person name="Negroni L."/>
            <person name="Berger I."/>
            <person name="Thomas T."/>
            <person name="Voss A.K."/>
            <person name="Dobyns W."/>
            <person name="Devys D."/>
            <person name="Tora L."/>
        </authorList>
    </citation>
    <scope>INVOLVEMENT IN NEDMLHB</scope>
</reference>
<reference key="13">
    <citation type="journal article" date="2022" name="Brain">
        <title>Mutations in TAF8 cause a neurodegenerative disorder.</title>
        <authorList>
            <person name="Wong K.M."/>
            <person name="Jepsen W.M."/>
            <person name="Efthymiou S."/>
            <person name="Salpietro V."/>
            <person name="Sanchez-Castillo M."/>
            <person name="Yip J."/>
            <person name="Kriouile Y."/>
            <person name="Diegmann S."/>
            <person name="Dreha-Kulaczewski S."/>
            <person name="Altmueller J."/>
            <person name="Thiele H."/>
            <person name="Nuernberg P."/>
            <person name="Toosi M.B."/>
            <person name="Akhondian J."/>
            <person name="Ghayoor Karimiani E."/>
            <person name="Hummel-Abmeier H."/>
            <person name="Huppke B."/>
            <person name="Houlden H."/>
            <person name="Gaertner J."/>
            <person name="Maroofian R."/>
            <person name="Huppke P."/>
        </authorList>
    </citation>
    <scope>INVOLVEMENT IN NEDMLHB</scope>
    <scope>SUBCELLULAR LOCATION</scope>
</reference>
<sequence>MADAAATAGAGGSGTRSGSKQSTNPADNYHLARRRTLQVVVSSLLTEAGFESAEKASVETLTEMLQSYISEIGRSAKSYCEHTARTQPTLSDIVVTLVEMGFNVDTLPAYAKRSQRMVITAPPVTNQPVTPKALTAGQNRPHPPHIPSHFPEFPDPHTYIKTPTYREPVSDYQVLREKAASQRRDVERALTRFMAKTGETQSLFKDDVSTFPLIAARPFTIPYLTALLPSELEMQQMEETDSSEQDEQTDTENLALHISMEDSGAEKENTSVLQQNPSLSGSRNGEENIIDNPYLRPVKKPKIRRKKSLS</sequence>
<feature type="initiator methionine" description="Removed" evidence="24 25">
    <location>
        <position position="1"/>
    </location>
</feature>
<feature type="chain" id="PRO_0000315396" description="Transcription initiation factor TFIID subunit 8">
    <location>
        <begin position="2"/>
        <end position="310"/>
    </location>
</feature>
<feature type="domain" description="Histone-fold; involved in forming hexamer structure in TFIID complex" evidence="8">
    <location>
        <begin position="35"/>
        <end position="102"/>
    </location>
</feature>
<feature type="region of interest" description="Disordered" evidence="3">
    <location>
        <begin position="1"/>
        <end position="30"/>
    </location>
</feature>
<feature type="region of interest" description="Disordered" evidence="3">
    <location>
        <begin position="262"/>
        <end position="310"/>
    </location>
</feature>
<feature type="short sequence motif" description="Nuclear localization signal" evidence="2">
    <location>
        <begin position="294"/>
        <end position="307"/>
    </location>
</feature>
<feature type="compositionally biased region" description="Polar residues" evidence="3">
    <location>
        <begin position="270"/>
        <end position="283"/>
    </location>
</feature>
<feature type="compositionally biased region" description="Basic residues" evidence="3">
    <location>
        <begin position="297"/>
        <end position="310"/>
    </location>
</feature>
<feature type="modified residue" description="N-acetylalanine" evidence="24 25">
    <location>
        <position position="2"/>
    </location>
</feature>
<feature type="modified residue" description="Phosphothreonine" evidence="23">
    <location>
        <position position="130"/>
    </location>
</feature>
<feature type="modified residue" description="Phosphoserine" evidence="26">
    <location>
        <position position="271"/>
    </location>
</feature>
<feature type="splice variant" id="VSP_030548" description="In isoform 3." evidence="10">
    <original>EDSGAEKENTSVLQQNPSLSGSRNGEENIIDNPYLRPVKKPKIRRKKSLS</original>
    <variation>IESRSVTQAGVQWQDLGSLQPPPPGFKRFSSLSLLSSWNYRRILEPRRRTPLSCSRTPPCRVAGMGRRTSSITLICGR</variation>
    <location>
        <begin position="261"/>
        <end position="310"/>
    </location>
</feature>
<feature type="splice variant" id="VSP_030549" description="In isoform 2." evidence="11">
    <original>SLS</original>
    <variation>PDTF</variation>
    <location>
        <begin position="308"/>
        <end position="310"/>
    </location>
</feature>
<feature type="sequence conflict" description="In Ref. 2; BAB71460." evidence="12" ref="2">
    <original>N</original>
    <variation>D</variation>
    <location>
        <position position="139"/>
    </location>
</feature>
<feature type="helix" evidence="27">
    <location>
        <begin position="29"/>
        <end position="48"/>
    </location>
</feature>
<feature type="strand" evidence="27">
    <location>
        <begin position="51"/>
        <end position="53"/>
    </location>
</feature>
<feature type="helix" evidence="27">
    <location>
        <begin position="55"/>
        <end position="80"/>
    </location>
</feature>
<feature type="helix" evidence="27">
    <location>
        <begin position="90"/>
        <end position="99"/>
    </location>
</feature>
<feature type="helix" evidence="27">
    <location>
        <begin position="104"/>
        <end position="106"/>
    </location>
</feature>
<feature type="helix" evidence="27">
    <location>
        <begin position="107"/>
        <end position="116"/>
    </location>
</feature>
<feature type="helix" evidence="28">
    <location>
        <begin position="172"/>
        <end position="196"/>
    </location>
</feature>
<feature type="strand" evidence="28">
    <location>
        <begin position="208"/>
        <end position="211"/>
    </location>
</feature>
<feature type="helix" evidence="28">
    <location>
        <begin position="222"/>
        <end position="227"/>
    </location>
</feature>
<evidence type="ECO:0000250" key="1">
    <source>
        <dbReference type="UniProtKB" id="Q9EQH4"/>
    </source>
</evidence>
<evidence type="ECO:0000255" key="2"/>
<evidence type="ECO:0000256" key="3">
    <source>
        <dbReference type="SAM" id="MobiDB-lite"/>
    </source>
</evidence>
<evidence type="ECO:0000269" key="4">
    <source>
    </source>
</evidence>
<evidence type="ECO:0000269" key="5">
    <source>
    </source>
</evidence>
<evidence type="ECO:0000269" key="6">
    <source>
    </source>
</evidence>
<evidence type="ECO:0000269" key="7">
    <source>
    </source>
</evidence>
<evidence type="ECO:0000269" key="8">
    <source>
    </source>
</evidence>
<evidence type="ECO:0000269" key="9">
    <source>
    </source>
</evidence>
<evidence type="ECO:0000303" key="10">
    <source>
    </source>
</evidence>
<evidence type="ECO:0000303" key="11">
    <source>
    </source>
</evidence>
<evidence type="ECO:0000305" key="12"/>
<evidence type="ECO:0007744" key="13">
    <source>
        <dbReference type="PDB" id="7EDX"/>
    </source>
</evidence>
<evidence type="ECO:0007744" key="14">
    <source>
        <dbReference type="PDB" id="7EG7"/>
    </source>
</evidence>
<evidence type="ECO:0007744" key="15">
    <source>
        <dbReference type="PDB" id="7EG8"/>
    </source>
</evidence>
<evidence type="ECO:0007744" key="16">
    <source>
        <dbReference type="PDB" id="7EG9"/>
    </source>
</evidence>
<evidence type="ECO:0007744" key="17">
    <source>
        <dbReference type="PDB" id="7EGA"/>
    </source>
</evidence>
<evidence type="ECO:0007744" key="18">
    <source>
        <dbReference type="PDB" id="7EGB"/>
    </source>
</evidence>
<evidence type="ECO:0007744" key="19">
    <source>
        <dbReference type="PDB" id="7EGC"/>
    </source>
</evidence>
<evidence type="ECO:0007744" key="20">
    <source>
        <dbReference type="PDB" id="7EGD"/>
    </source>
</evidence>
<evidence type="ECO:0007744" key="21">
    <source>
        <dbReference type="PDB" id="7EGE"/>
    </source>
</evidence>
<evidence type="ECO:0007744" key="22">
    <source>
        <dbReference type="PDB" id="7EGG"/>
    </source>
</evidence>
<evidence type="ECO:0007744" key="23">
    <source>
    </source>
</evidence>
<evidence type="ECO:0007744" key="24">
    <source>
    </source>
</evidence>
<evidence type="ECO:0007744" key="25">
    <source>
    </source>
</evidence>
<evidence type="ECO:0007744" key="26">
    <source>
    </source>
</evidence>
<evidence type="ECO:0007829" key="27">
    <source>
        <dbReference type="PDB" id="4WV4"/>
    </source>
</evidence>
<evidence type="ECO:0007829" key="28">
    <source>
        <dbReference type="PDB" id="7EGH"/>
    </source>
</evidence>
<comment type="function">
    <text evidence="1 4 8">The TFIID basal transcription factor complex plays a major role in the initiation of RNA polymerase II (Pol II)-dependent transcription (PubMed:33795473). TFIID recognizes and binds promoters with or without a TATA box via its subunit TBP, a TATA-box-binding protein, and promotes assembly of the pre-initiation complex (PIC) (PubMed:33795473). The TFIID complex consists of TBP and TBP-associated factors (TAFs), including TAF1, TAF2, TAF3, TAF4, TAF5, TAF6, TAF7, TAF8, TAF9, TAF10, TAF11, TAF12 and TAF13 (PubMed:33795473). The TFIID complex structure can be divided into 3 modules TFIID-A, TFIID-B, and TFIID-C (PubMed:33795473). TAF8 is involved in forming the TFIID-B module, together with TAF5 (PubMed:33795473). Mediates both basal and activator-dependent transcription (PubMed:14580349). Plays a role in the differentiation of preadipocyte fibroblasts to adipocytes, however, does not seem to play a role in differentiation of myoblasts (PubMed:14580349). Required for the integration of TAF10 in the TAF complex (PubMed:14580349). May be important for survival of cells of the inner cell mass which constitute the pluripotent cell population of the early embryo (By similarity).</text>
</comment>
<comment type="subunit">
    <text evidence="4 5 6 8">Component of the TFIID basal transcription factor complex, composed of TATA-box-binding protein TBP, and a number of TBP-associated factors (TAFs), including TAF1, TAF2, TAF3, TAF4, TAF5, TAF6, TAF7, TAF8, TAF9, TAF10, TAF11, TAF12 and TAF13 (PubMed:33795473). Interacts with TBP, TAF1, TAF6, TAF10, TAF11 and TAF13 (PubMed:14580349, PubMed:15870280, PubMed:17375202). Component also of a small TAF complex (SMAT) containing TAF8, TAF10 and SUPT7L (PubMed:17375202). Forms a heterodimer with TAF10 (PubMed:17375202). Interaction with TAF10 is mediated mainly via its histone fold domain while interaction with SUPT7L is via its C-terminal region (PubMed:15870280).</text>
</comment>
<comment type="interaction">
    <interactant intactId="EBI-9089028">
        <id>Q7Z7C8-2</id>
    </interactant>
    <interactant intactId="EBI-1054228">
        <id>P41091</id>
        <label>EIF2S3</label>
    </interactant>
    <organismsDiffer>false</organismsDiffer>
    <experiments>3</experiments>
</comment>
<comment type="interaction">
    <interactant intactId="EBI-9089028">
        <id>Q7Z7C8-2</id>
    </interactant>
    <interactant intactId="EBI-10226858">
        <id>Q0VDC6</id>
        <label>FKBP1A</label>
    </interactant>
    <organismsDiffer>false</organismsDiffer>
    <experiments>3</experiments>
</comment>
<comment type="interaction">
    <interactant intactId="EBI-9089028">
        <id>Q7Z7C8-2</id>
    </interactant>
    <interactant intactId="EBI-356991">
        <id>P54652</id>
        <label>HSPA2</label>
    </interactant>
    <organismsDiffer>false</organismsDiffer>
    <experiments>3</experiments>
</comment>
<comment type="interaction">
    <interactant intactId="EBI-9089028">
        <id>Q7Z7C8-2</id>
    </interactant>
    <interactant intactId="EBI-1053431">
        <id>P49591</id>
        <label>SARS1</label>
    </interactant>
    <organismsDiffer>false</organismsDiffer>
    <experiments>3</experiments>
</comment>
<comment type="interaction">
    <interactant intactId="EBI-9089028">
        <id>Q7Z7C8-2</id>
    </interactant>
    <interactant intactId="EBI-708376">
        <id>Q12962</id>
        <label>TAF10</label>
    </interactant>
    <organismsDiffer>false</organismsDiffer>
    <experiments>6</experiments>
</comment>
<comment type="subcellular location">
    <subcellularLocation>
        <location evidence="4 9">Nucleus</location>
    </subcellularLocation>
    <subcellularLocation>
        <location evidence="9">Cytoplasm</location>
    </subcellularLocation>
    <text evidence="9">Predominantly nuclear.</text>
</comment>
<comment type="alternative products">
    <event type="alternative splicing"/>
    <isoform>
        <id>Q7Z7C8-1</id>
        <name>1</name>
        <sequence type="displayed"/>
    </isoform>
    <isoform>
        <id>Q7Z7C8-2</id>
        <name>2</name>
        <sequence type="described" ref="VSP_030549"/>
    </isoform>
    <isoform>
        <id>Q7Z7C8-4</id>
        <name>3</name>
        <sequence type="described" ref="VSP_030548"/>
    </isoform>
</comment>
<comment type="induction">
    <text>Induced with triglyceride accumulation.</text>
</comment>
<comment type="domain">
    <text>Ectopic expression of the histone fold domain acts as a dominant-negative mutant resulting in differentiation inhibition.</text>
</comment>
<comment type="disease" evidence="7 9">
    <disease id="DI-06455">
        <name>Neurodevelopmental disorder with severe motor impairment, absent language, cerebral hypomyelination, and brain atrophy</name>
        <acronym>NEDMLHB</acronym>
        <description>An autosomal recessive disorder with onset soon after birth or in early infancy. Affected individuals do not show developmental progress, are unable to sit or walk, do not acquire speech, have poor visual fixation, and show poor overall growth associated with feeding problems. Additional variable features include seizures, spasticity, and joint contractures. Brain imaging shows hypomyelination, thin corpus callosum, and cerebral and cerebellar atrophy.</description>
        <dbReference type="MIM" id="619972"/>
    </disease>
    <text>The disease is caused by variants affecting the gene represented in this entry.</text>
</comment>
<comment type="miscellaneous">
    <text>'Taube nuss' means 'empty nut' in German.</text>
</comment>
<comment type="similarity">
    <text evidence="12">Belongs to the TAF8 family.</text>
</comment>
<comment type="sequence caution" evidence="12">
    <conflict type="frameshift">
        <sequence resource="EMBL-CDS" id="BAB71460"/>
    </conflict>
</comment>
<name>TAF8_HUMAN</name>
<gene>
    <name type="primary">TAF8</name>
    <name type="synonym">TAFII43</name>
    <name type="synonym">TBN</name>
</gene>
<proteinExistence type="evidence at protein level"/>
<keyword id="KW-0002">3D-structure</keyword>
<keyword id="KW-0007">Acetylation</keyword>
<keyword id="KW-0025">Alternative splicing</keyword>
<keyword id="KW-0963">Cytoplasm</keyword>
<keyword id="KW-0217">Developmental protein</keyword>
<keyword id="KW-0221">Differentiation</keyword>
<keyword id="KW-0903">Direct protein sequencing</keyword>
<keyword id="KW-0991">Intellectual disability</keyword>
<keyword id="KW-0539">Nucleus</keyword>
<keyword id="KW-0597">Phosphoprotein</keyword>
<keyword id="KW-1267">Proteomics identification</keyword>
<keyword id="KW-1185">Reference proteome</keyword>
<keyword id="KW-0804">Transcription</keyword>
<keyword id="KW-0805">Transcription regulation</keyword>
<organism>
    <name type="scientific">Homo sapiens</name>
    <name type="common">Human</name>
    <dbReference type="NCBI Taxonomy" id="9606"/>
    <lineage>
        <taxon>Eukaryota</taxon>
        <taxon>Metazoa</taxon>
        <taxon>Chordata</taxon>
        <taxon>Craniata</taxon>
        <taxon>Vertebrata</taxon>
        <taxon>Euteleostomi</taxon>
        <taxon>Mammalia</taxon>
        <taxon>Eutheria</taxon>
        <taxon>Euarchontoglires</taxon>
        <taxon>Primates</taxon>
        <taxon>Haplorrhini</taxon>
        <taxon>Catarrhini</taxon>
        <taxon>Hominidae</taxon>
        <taxon>Homo</taxon>
    </lineage>
</organism>